<protein>
    <recommendedName>
        <fullName evidence="1">3-isopropylmalate dehydratase small subunit</fullName>
        <ecNumber evidence="1">4.2.1.33</ecNumber>
    </recommendedName>
    <alternativeName>
        <fullName evidence="1">Alpha-IPM isomerase</fullName>
        <shortName evidence="1">IPMI</shortName>
    </alternativeName>
    <alternativeName>
        <fullName evidence="1">Isopropylmalate isomerase</fullName>
    </alternativeName>
</protein>
<proteinExistence type="inferred from homology"/>
<feature type="chain" id="PRO_1000072959" description="3-isopropylmalate dehydratase small subunit">
    <location>
        <begin position="1"/>
        <end position="216"/>
    </location>
</feature>
<keyword id="KW-0028">Amino-acid biosynthesis</keyword>
<keyword id="KW-0100">Branched-chain amino acid biosynthesis</keyword>
<keyword id="KW-0432">Leucine biosynthesis</keyword>
<keyword id="KW-0456">Lyase</keyword>
<gene>
    <name evidence="1" type="primary">leuD</name>
    <name type="ordered locus">PsycPRwf_1935</name>
</gene>
<reference key="1">
    <citation type="submission" date="2007-05" db="EMBL/GenBank/DDBJ databases">
        <title>Complete sequence of chromosome of Psychrobacter sp. PRwf-1.</title>
        <authorList>
            <consortium name="US DOE Joint Genome Institute"/>
            <person name="Copeland A."/>
            <person name="Lucas S."/>
            <person name="Lapidus A."/>
            <person name="Barry K."/>
            <person name="Detter J.C."/>
            <person name="Glavina del Rio T."/>
            <person name="Hammon N."/>
            <person name="Israni S."/>
            <person name="Dalin E."/>
            <person name="Tice H."/>
            <person name="Pitluck S."/>
            <person name="Chain P."/>
            <person name="Malfatti S."/>
            <person name="Shin M."/>
            <person name="Vergez L."/>
            <person name="Schmutz J."/>
            <person name="Larimer F."/>
            <person name="Land M."/>
            <person name="Hauser L."/>
            <person name="Kyrpides N."/>
            <person name="Kim E."/>
            <person name="Tiedje J."/>
            <person name="Richardson P."/>
        </authorList>
    </citation>
    <scope>NUCLEOTIDE SEQUENCE [LARGE SCALE GENOMIC DNA]</scope>
    <source>
        <strain>PRwf-1</strain>
    </source>
</reference>
<sequence>MQAYNTQTGIVCPLDRSNVDTDQIIPKQFLKSIKRTGFGVNLFDDWRYLDEGFPGQDNSKRPINPDFVLNKPRYQGATILLARDNFGCGSSREHAPWALSEYGFRTVIAPSFADIFYNNCFKNGMLPIVLTEAQVDDLFEQCLANEGYELTADLERQVVVTPDGTEYPFEVDEFRKHCLLNGLDDIGLTLQQSEAIKAYEAKMQQNTPWIFKEVRA</sequence>
<accession>A5WGT4</accession>
<evidence type="ECO:0000255" key="1">
    <source>
        <dbReference type="HAMAP-Rule" id="MF_01031"/>
    </source>
</evidence>
<dbReference type="EC" id="4.2.1.33" evidence="1"/>
<dbReference type="EMBL" id="CP000713">
    <property type="protein sequence ID" value="ABQ94875.1"/>
    <property type="molecule type" value="Genomic_DNA"/>
</dbReference>
<dbReference type="SMR" id="A5WGT4"/>
<dbReference type="STRING" id="349106.PsycPRwf_1935"/>
<dbReference type="KEGG" id="prw:PsycPRwf_1935"/>
<dbReference type="eggNOG" id="COG0066">
    <property type="taxonomic scope" value="Bacteria"/>
</dbReference>
<dbReference type="HOGENOM" id="CLU_081378_0_3_6"/>
<dbReference type="UniPathway" id="UPA00048">
    <property type="reaction ID" value="UER00071"/>
</dbReference>
<dbReference type="GO" id="GO:0009316">
    <property type="term" value="C:3-isopropylmalate dehydratase complex"/>
    <property type="evidence" value="ECO:0007669"/>
    <property type="project" value="InterPro"/>
</dbReference>
<dbReference type="GO" id="GO:0003861">
    <property type="term" value="F:3-isopropylmalate dehydratase activity"/>
    <property type="evidence" value="ECO:0007669"/>
    <property type="project" value="UniProtKB-UniRule"/>
</dbReference>
<dbReference type="GO" id="GO:0009098">
    <property type="term" value="P:L-leucine biosynthetic process"/>
    <property type="evidence" value="ECO:0007669"/>
    <property type="project" value="UniProtKB-UniRule"/>
</dbReference>
<dbReference type="CDD" id="cd01577">
    <property type="entry name" value="IPMI_Swivel"/>
    <property type="match status" value="1"/>
</dbReference>
<dbReference type="FunFam" id="3.20.19.10:FF:000003">
    <property type="entry name" value="3-isopropylmalate dehydratase small subunit"/>
    <property type="match status" value="1"/>
</dbReference>
<dbReference type="Gene3D" id="3.20.19.10">
    <property type="entry name" value="Aconitase, domain 4"/>
    <property type="match status" value="1"/>
</dbReference>
<dbReference type="HAMAP" id="MF_01031">
    <property type="entry name" value="LeuD_type1"/>
    <property type="match status" value="1"/>
</dbReference>
<dbReference type="InterPro" id="IPR004431">
    <property type="entry name" value="3-IsopropMal_deHydase_ssu"/>
</dbReference>
<dbReference type="InterPro" id="IPR015928">
    <property type="entry name" value="Aconitase/3IPM_dehydase_swvl"/>
</dbReference>
<dbReference type="InterPro" id="IPR000573">
    <property type="entry name" value="AconitaseA/IPMdHydase_ssu_swvl"/>
</dbReference>
<dbReference type="InterPro" id="IPR033940">
    <property type="entry name" value="IPMI_Swivel"/>
</dbReference>
<dbReference type="InterPro" id="IPR050075">
    <property type="entry name" value="LeuD"/>
</dbReference>
<dbReference type="NCBIfam" id="TIGR00171">
    <property type="entry name" value="leuD"/>
    <property type="match status" value="1"/>
</dbReference>
<dbReference type="NCBIfam" id="NF002458">
    <property type="entry name" value="PRK01641.1"/>
    <property type="match status" value="1"/>
</dbReference>
<dbReference type="PANTHER" id="PTHR43345:SF5">
    <property type="entry name" value="3-ISOPROPYLMALATE DEHYDRATASE SMALL SUBUNIT"/>
    <property type="match status" value="1"/>
</dbReference>
<dbReference type="PANTHER" id="PTHR43345">
    <property type="entry name" value="3-ISOPROPYLMALATE DEHYDRATASE SMALL SUBUNIT 2-RELATED-RELATED"/>
    <property type="match status" value="1"/>
</dbReference>
<dbReference type="Pfam" id="PF00694">
    <property type="entry name" value="Aconitase_C"/>
    <property type="match status" value="1"/>
</dbReference>
<dbReference type="SUPFAM" id="SSF52016">
    <property type="entry name" value="LeuD/IlvD-like"/>
    <property type="match status" value="1"/>
</dbReference>
<comment type="function">
    <text evidence="1">Catalyzes the isomerization between 2-isopropylmalate and 3-isopropylmalate, via the formation of 2-isopropylmaleate.</text>
</comment>
<comment type="catalytic activity">
    <reaction evidence="1">
        <text>(2R,3S)-3-isopropylmalate = (2S)-2-isopropylmalate</text>
        <dbReference type="Rhea" id="RHEA:32287"/>
        <dbReference type="ChEBI" id="CHEBI:1178"/>
        <dbReference type="ChEBI" id="CHEBI:35121"/>
        <dbReference type="EC" id="4.2.1.33"/>
    </reaction>
</comment>
<comment type="pathway">
    <text evidence="1">Amino-acid biosynthesis; L-leucine biosynthesis; L-leucine from 3-methyl-2-oxobutanoate: step 2/4.</text>
</comment>
<comment type="subunit">
    <text evidence="1">Heterodimer of LeuC and LeuD.</text>
</comment>
<comment type="similarity">
    <text evidence="1">Belongs to the LeuD family. LeuD type 1 subfamily.</text>
</comment>
<name>LEUD_PSYWF</name>
<organism>
    <name type="scientific">Psychrobacter sp. (strain PRwf-1)</name>
    <dbReference type="NCBI Taxonomy" id="349106"/>
    <lineage>
        <taxon>Bacteria</taxon>
        <taxon>Pseudomonadati</taxon>
        <taxon>Pseudomonadota</taxon>
        <taxon>Gammaproteobacteria</taxon>
        <taxon>Moraxellales</taxon>
        <taxon>Moraxellaceae</taxon>
        <taxon>Psychrobacter</taxon>
    </lineage>
</organism>